<keyword id="KW-0963">Cytoplasm</keyword>
<keyword id="KW-0479">Metal-binding</keyword>
<keyword id="KW-0520">NAD</keyword>
<keyword id="KW-0560">Oxidoreductase</keyword>
<keyword id="KW-1185">Reference proteome</keyword>
<keyword id="KW-0862">Zinc</keyword>
<gene>
    <name type="ordered locus">At4g22110</name>
    <name type="ORF">F1N20.210</name>
</gene>
<comment type="catalytic activity">
    <reaction evidence="2">
        <text>a primary alcohol + NAD(+) = an aldehyde + NADH + H(+)</text>
        <dbReference type="Rhea" id="RHEA:10736"/>
        <dbReference type="ChEBI" id="CHEBI:15378"/>
        <dbReference type="ChEBI" id="CHEBI:15734"/>
        <dbReference type="ChEBI" id="CHEBI:17478"/>
        <dbReference type="ChEBI" id="CHEBI:57540"/>
        <dbReference type="ChEBI" id="CHEBI:57945"/>
        <dbReference type="EC" id="1.1.1.1"/>
    </reaction>
</comment>
<comment type="catalytic activity">
    <reaction evidence="2">
        <text>a secondary alcohol + NAD(+) = a ketone + NADH + H(+)</text>
        <dbReference type="Rhea" id="RHEA:10740"/>
        <dbReference type="ChEBI" id="CHEBI:15378"/>
        <dbReference type="ChEBI" id="CHEBI:17087"/>
        <dbReference type="ChEBI" id="CHEBI:35681"/>
        <dbReference type="ChEBI" id="CHEBI:57540"/>
        <dbReference type="ChEBI" id="CHEBI:57945"/>
        <dbReference type="EC" id="1.1.1.1"/>
    </reaction>
</comment>
<comment type="cofactor">
    <cofactor evidence="2">
        <name>Zn(2+)</name>
        <dbReference type="ChEBI" id="CHEBI:29105"/>
    </cofactor>
    <text evidence="2">Binds 2 Zn(2+) ions per subunit.</text>
</comment>
<comment type="subunit">
    <text evidence="2">Homodimer.</text>
</comment>
<comment type="subcellular location">
    <subcellularLocation>
        <location evidence="2">Cytoplasm</location>
    </subcellularLocation>
</comment>
<comment type="similarity">
    <text evidence="3">Belongs to the zinc-containing alcohol dehydrogenase family. Class-III subfamily.</text>
</comment>
<comment type="sequence caution" evidence="3">
    <conflict type="erroneous initiation">
        <sequence resource="EMBL-CDS" id="AAM67260"/>
    </conflict>
</comment>
<comment type="sequence caution" evidence="3">
    <conflict type="erroneous gene model prediction">
        <sequence resource="EMBL-CDS" id="CAA18114"/>
    </conflict>
</comment>
<comment type="sequence caution" evidence="3">
    <conflict type="erroneous gene model prediction">
        <sequence resource="EMBL-CDS" id="CAB79166"/>
    </conflict>
</comment>
<sequence>MEKTSMFSIHEGKPIRCKAAVSRKPGEALVIEEIHVDPPQAYEVRIKIICTSLCHTDVSFSKIDSGPLARFPRILGHEAVGVIESIGEHVNGFQQGDVVLPVFHPHCEECRDCKSSKSNWCARFADDFLSNTRRYGMTSRFKDSFGEDIYHFLFVSSFSEYTVVDIAHLVKISPDIPVDKAALLSCGVSTGIGAAWKVANVEKGSTVAVFGLGAVGLAVGEGARLRGAGKIIGVDLNPEKFELGKKFGFTDFINSTLCGENKISEVIKEMTGGGVDYSFECVGLPSLLTEAFSSTRTGSGKTVVLGIDKHLTPVSLGSFDLLRGRHVCGSLFGGLKPKLDIPILVDHYLKKELNLDSFITHELKFEEINKAFDLLVQGKSLRCILWMNK</sequence>
<protein>
    <recommendedName>
        <fullName>Alcohol dehydrogenase-like 5</fullName>
        <ecNumber evidence="2">1.1.1.1</ecNumber>
    </recommendedName>
</protein>
<evidence type="ECO:0000250" key="1">
    <source>
        <dbReference type="UniProtKB" id="P00327"/>
    </source>
</evidence>
<evidence type="ECO:0000250" key="2">
    <source>
        <dbReference type="UniProtKB" id="P06525"/>
    </source>
</evidence>
<evidence type="ECO:0000305" key="3"/>
<accession>Q0V7W6</accession>
<accession>O65459</accession>
<accession>Q8LGK8</accession>
<feature type="chain" id="PRO_0000299187" description="Alcohol dehydrogenase-like 5">
    <location>
        <begin position="1"/>
        <end position="389"/>
    </location>
</feature>
<feature type="binding site" evidence="2">
    <location>
        <position position="54"/>
    </location>
    <ligand>
        <name>Zn(2+)</name>
        <dbReference type="ChEBI" id="CHEBI:29105"/>
        <label>1</label>
        <note>catalytic</note>
    </ligand>
</feature>
<feature type="binding site" evidence="2">
    <location>
        <position position="56"/>
    </location>
    <ligand>
        <name>an alcohol</name>
        <dbReference type="ChEBI" id="CHEBI:30879"/>
    </ligand>
</feature>
<feature type="binding site" evidence="2">
    <location>
        <position position="56"/>
    </location>
    <ligand>
        <name>NAD(+)</name>
        <dbReference type="ChEBI" id="CHEBI:57540"/>
    </ligand>
</feature>
<feature type="binding site" evidence="2">
    <location>
        <position position="56"/>
    </location>
    <ligand>
        <name>Zn(2+)</name>
        <dbReference type="ChEBI" id="CHEBI:29105"/>
        <label>1</label>
        <note>catalytic</note>
    </ligand>
</feature>
<feature type="binding site" evidence="1">
    <location>
        <position position="77"/>
    </location>
    <ligand>
        <name>an alcohol</name>
        <dbReference type="ChEBI" id="CHEBI:30879"/>
    </ligand>
</feature>
<feature type="binding site" evidence="2">
    <location>
        <position position="77"/>
    </location>
    <ligand>
        <name>Zn(2+)</name>
        <dbReference type="ChEBI" id="CHEBI:29105"/>
        <label>1</label>
        <note>catalytic</note>
    </ligand>
</feature>
<feature type="binding site" evidence="2">
    <location>
        <position position="107"/>
    </location>
    <ligand>
        <name>Zn(2+)</name>
        <dbReference type="ChEBI" id="CHEBI:29105"/>
        <label>2</label>
    </ligand>
</feature>
<feature type="binding site" evidence="2">
    <location>
        <position position="110"/>
    </location>
    <ligand>
        <name>Zn(2+)</name>
        <dbReference type="ChEBI" id="CHEBI:29105"/>
        <label>2</label>
    </ligand>
</feature>
<feature type="binding site" evidence="2">
    <location>
        <position position="113"/>
    </location>
    <ligand>
        <name>Zn(2+)</name>
        <dbReference type="ChEBI" id="CHEBI:29105"/>
        <label>2</label>
    </ligand>
</feature>
<feature type="binding site" evidence="2">
    <location>
        <position position="121"/>
    </location>
    <ligand>
        <name>Zn(2+)</name>
        <dbReference type="ChEBI" id="CHEBI:29105"/>
        <label>2</label>
    </ligand>
</feature>
<feature type="binding site" evidence="2">
    <location>
        <position position="186"/>
    </location>
    <ligand>
        <name>Zn(2+)</name>
        <dbReference type="ChEBI" id="CHEBI:29105"/>
        <label>1</label>
        <note>catalytic</note>
    </ligand>
</feature>
<feature type="binding site" evidence="2">
    <location>
        <begin position="211"/>
        <end position="216"/>
    </location>
    <ligand>
        <name>NAD(+)</name>
        <dbReference type="ChEBI" id="CHEBI:57540"/>
    </ligand>
</feature>
<feature type="binding site" evidence="2">
    <location>
        <position position="235"/>
    </location>
    <ligand>
        <name>NAD(+)</name>
        <dbReference type="ChEBI" id="CHEBI:57540"/>
    </ligand>
</feature>
<feature type="binding site" evidence="2">
    <location>
        <position position="240"/>
    </location>
    <ligand>
        <name>NAD(+)</name>
        <dbReference type="ChEBI" id="CHEBI:57540"/>
    </ligand>
</feature>
<feature type="binding site" evidence="1">
    <location>
        <begin position="305"/>
        <end position="307"/>
    </location>
    <ligand>
        <name>NAD(+)</name>
        <dbReference type="ChEBI" id="CHEBI:57540"/>
    </ligand>
</feature>
<feature type="binding site" evidence="2">
    <location>
        <position position="332"/>
    </location>
    <ligand>
        <name>NAD(+)</name>
        <dbReference type="ChEBI" id="CHEBI:57540"/>
    </ligand>
</feature>
<feature type="binding site" evidence="2">
    <location>
        <position position="382"/>
    </location>
    <ligand>
        <name>NAD(+)</name>
        <dbReference type="ChEBI" id="CHEBI:57540"/>
    </ligand>
</feature>
<feature type="sequence conflict" description="In Ref. 4; AAM67260." evidence="3" ref="4">
    <original>V</original>
    <variation>I</variation>
    <location>
        <position position="98"/>
    </location>
</feature>
<feature type="sequence conflict" description="In Ref. 4; AAM67260." evidence="3" ref="4">
    <original>D</original>
    <variation>S</variation>
    <location>
        <position position="251"/>
    </location>
</feature>
<feature type="sequence conflict" description="In Ref. 4; AAM67260." evidence="3" ref="4">
    <original>S</original>
    <variation>P</variation>
    <location>
        <position position="255"/>
    </location>
</feature>
<feature type="sequence conflict" description="In Ref. 4; AAM67260." evidence="3" ref="4">
    <original>N</original>
    <variation>K</variation>
    <location>
        <position position="261"/>
    </location>
</feature>
<dbReference type="EC" id="1.1.1.1" evidence="2"/>
<dbReference type="EMBL" id="AL022140">
    <property type="protein sequence ID" value="CAA18114.1"/>
    <property type="status" value="ALT_SEQ"/>
    <property type="molecule type" value="Genomic_DNA"/>
</dbReference>
<dbReference type="EMBL" id="AL161556">
    <property type="protein sequence ID" value="CAB79166.1"/>
    <property type="status" value="ALT_SEQ"/>
    <property type="molecule type" value="Genomic_DNA"/>
</dbReference>
<dbReference type="EMBL" id="CP002687">
    <property type="protein sequence ID" value="AEE84551.1"/>
    <property type="molecule type" value="Genomic_DNA"/>
</dbReference>
<dbReference type="EMBL" id="CP002687">
    <property type="protein sequence ID" value="AEE84552.1"/>
    <property type="molecule type" value="Genomic_DNA"/>
</dbReference>
<dbReference type="EMBL" id="BT026454">
    <property type="protein sequence ID" value="ABH04561.1"/>
    <property type="molecule type" value="mRNA"/>
</dbReference>
<dbReference type="EMBL" id="AY084215">
    <property type="protein sequence ID" value="AAM67260.1"/>
    <property type="status" value="ALT_INIT"/>
    <property type="molecule type" value="mRNA"/>
</dbReference>
<dbReference type="PIR" id="T49118">
    <property type="entry name" value="T49118"/>
</dbReference>
<dbReference type="RefSeq" id="NP_567645.1">
    <property type="nucleotide sequence ID" value="NM_118332.2"/>
</dbReference>
<dbReference type="RefSeq" id="NP_974589.1">
    <property type="nucleotide sequence ID" value="NM_202860.1"/>
</dbReference>
<dbReference type="SMR" id="Q0V7W6"/>
<dbReference type="FunCoup" id="Q0V7W6">
    <property type="interactions" value="323"/>
</dbReference>
<dbReference type="STRING" id="3702.Q0V7W6"/>
<dbReference type="PaxDb" id="3702-AT4G22110.2"/>
<dbReference type="ProteomicsDB" id="244694"/>
<dbReference type="EnsemblPlants" id="AT4G22110.1">
    <property type="protein sequence ID" value="AT4G22110.1"/>
    <property type="gene ID" value="AT4G22110"/>
</dbReference>
<dbReference type="EnsemblPlants" id="AT4G22110.2">
    <property type="protein sequence ID" value="AT4G22110.2"/>
    <property type="gene ID" value="AT4G22110"/>
</dbReference>
<dbReference type="GeneID" id="828300"/>
<dbReference type="Gramene" id="AT4G22110.1">
    <property type="protein sequence ID" value="AT4G22110.1"/>
    <property type="gene ID" value="AT4G22110"/>
</dbReference>
<dbReference type="Gramene" id="AT4G22110.2">
    <property type="protein sequence ID" value="AT4G22110.2"/>
    <property type="gene ID" value="AT4G22110"/>
</dbReference>
<dbReference type="KEGG" id="ath:AT4G22110"/>
<dbReference type="Araport" id="AT4G22110"/>
<dbReference type="TAIR" id="AT4G22110"/>
<dbReference type="eggNOG" id="KOG0022">
    <property type="taxonomic scope" value="Eukaryota"/>
</dbReference>
<dbReference type="HOGENOM" id="CLU_026673_14_0_1"/>
<dbReference type="InParanoid" id="Q0V7W6"/>
<dbReference type="OMA" id="RCILWMN"/>
<dbReference type="PhylomeDB" id="Q0V7W6"/>
<dbReference type="BioCyc" id="ARA:AT4G22110-MONOMER"/>
<dbReference type="PRO" id="PR:Q0V7W6"/>
<dbReference type="Proteomes" id="UP000006548">
    <property type="component" value="Chromosome 4"/>
</dbReference>
<dbReference type="ExpressionAtlas" id="Q0V7W6">
    <property type="expression patterns" value="baseline and differential"/>
</dbReference>
<dbReference type="GO" id="GO:0005737">
    <property type="term" value="C:cytoplasm"/>
    <property type="evidence" value="ECO:0007669"/>
    <property type="project" value="UniProtKB-SubCell"/>
</dbReference>
<dbReference type="GO" id="GO:0004022">
    <property type="term" value="F:alcohol dehydrogenase (NAD+) activity"/>
    <property type="evidence" value="ECO:0007669"/>
    <property type="project" value="UniProtKB-EC"/>
</dbReference>
<dbReference type="GO" id="GO:0008270">
    <property type="term" value="F:zinc ion binding"/>
    <property type="evidence" value="ECO:0007669"/>
    <property type="project" value="InterPro"/>
</dbReference>
<dbReference type="CDD" id="cd08301">
    <property type="entry name" value="alcohol_DH_plants"/>
    <property type="match status" value="1"/>
</dbReference>
<dbReference type="FunFam" id="3.90.180.10:FF:000007">
    <property type="entry name" value="Alcohol dehydrogenase 6"/>
    <property type="match status" value="1"/>
</dbReference>
<dbReference type="FunFam" id="3.40.50.720:FF:000003">
    <property type="entry name" value="S-(hydroxymethyl)glutathione dehydrogenase"/>
    <property type="match status" value="1"/>
</dbReference>
<dbReference type="Gene3D" id="3.90.180.10">
    <property type="entry name" value="Medium-chain alcohol dehydrogenases, catalytic domain"/>
    <property type="match status" value="1"/>
</dbReference>
<dbReference type="Gene3D" id="3.40.50.720">
    <property type="entry name" value="NAD(P)-binding Rossmann-like Domain"/>
    <property type="match status" value="1"/>
</dbReference>
<dbReference type="InterPro" id="IPR013149">
    <property type="entry name" value="ADH-like_C"/>
</dbReference>
<dbReference type="InterPro" id="IPR013154">
    <property type="entry name" value="ADH-like_N"/>
</dbReference>
<dbReference type="InterPro" id="IPR002328">
    <property type="entry name" value="ADH_Zn_CS"/>
</dbReference>
<dbReference type="InterPro" id="IPR011032">
    <property type="entry name" value="GroES-like_sf"/>
</dbReference>
<dbReference type="InterPro" id="IPR036291">
    <property type="entry name" value="NAD(P)-bd_dom_sf"/>
</dbReference>
<dbReference type="PANTHER" id="PTHR43880">
    <property type="entry name" value="ALCOHOL DEHYDROGENASE"/>
    <property type="match status" value="1"/>
</dbReference>
<dbReference type="PANTHER" id="PTHR43880:SF28">
    <property type="entry name" value="ALCOHOL DEHYDROGENASE-LIKE 1-RELATED"/>
    <property type="match status" value="1"/>
</dbReference>
<dbReference type="Pfam" id="PF08240">
    <property type="entry name" value="ADH_N"/>
    <property type="match status" value="1"/>
</dbReference>
<dbReference type="Pfam" id="PF00107">
    <property type="entry name" value="ADH_zinc_N"/>
    <property type="match status" value="1"/>
</dbReference>
<dbReference type="SUPFAM" id="SSF50129">
    <property type="entry name" value="GroES-like"/>
    <property type="match status" value="2"/>
</dbReference>
<dbReference type="SUPFAM" id="SSF51735">
    <property type="entry name" value="NAD(P)-binding Rossmann-fold domains"/>
    <property type="match status" value="1"/>
</dbReference>
<dbReference type="PROSITE" id="PS00059">
    <property type="entry name" value="ADH_ZINC"/>
    <property type="match status" value="1"/>
</dbReference>
<organism>
    <name type="scientific">Arabidopsis thaliana</name>
    <name type="common">Mouse-ear cress</name>
    <dbReference type="NCBI Taxonomy" id="3702"/>
    <lineage>
        <taxon>Eukaryota</taxon>
        <taxon>Viridiplantae</taxon>
        <taxon>Streptophyta</taxon>
        <taxon>Embryophyta</taxon>
        <taxon>Tracheophyta</taxon>
        <taxon>Spermatophyta</taxon>
        <taxon>Magnoliopsida</taxon>
        <taxon>eudicotyledons</taxon>
        <taxon>Gunneridae</taxon>
        <taxon>Pentapetalae</taxon>
        <taxon>rosids</taxon>
        <taxon>malvids</taxon>
        <taxon>Brassicales</taxon>
        <taxon>Brassicaceae</taxon>
        <taxon>Camelineae</taxon>
        <taxon>Arabidopsis</taxon>
    </lineage>
</organism>
<proteinExistence type="evidence at transcript level"/>
<reference key="1">
    <citation type="journal article" date="1999" name="Nature">
        <title>Sequence and analysis of chromosome 4 of the plant Arabidopsis thaliana.</title>
        <authorList>
            <person name="Mayer K.F.X."/>
            <person name="Schueller C."/>
            <person name="Wambutt R."/>
            <person name="Murphy G."/>
            <person name="Volckaert G."/>
            <person name="Pohl T."/>
            <person name="Duesterhoeft A."/>
            <person name="Stiekema W."/>
            <person name="Entian K.-D."/>
            <person name="Terryn N."/>
            <person name="Harris B."/>
            <person name="Ansorge W."/>
            <person name="Brandt P."/>
            <person name="Grivell L.A."/>
            <person name="Rieger M."/>
            <person name="Weichselgartner M."/>
            <person name="de Simone V."/>
            <person name="Obermaier B."/>
            <person name="Mache R."/>
            <person name="Mueller M."/>
            <person name="Kreis M."/>
            <person name="Delseny M."/>
            <person name="Puigdomenech P."/>
            <person name="Watson M."/>
            <person name="Schmidtheini T."/>
            <person name="Reichert B."/>
            <person name="Portetelle D."/>
            <person name="Perez-Alonso M."/>
            <person name="Boutry M."/>
            <person name="Bancroft I."/>
            <person name="Vos P."/>
            <person name="Hoheisel J."/>
            <person name="Zimmermann W."/>
            <person name="Wedler H."/>
            <person name="Ridley P."/>
            <person name="Langham S.-A."/>
            <person name="McCullagh B."/>
            <person name="Bilham L."/>
            <person name="Robben J."/>
            <person name="van der Schueren J."/>
            <person name="Grymonprez B."/>
            <person name="Chuang Y.-J."/>
            <person name="Vandenbussche F."/>
            <person name="Braeken M."/>
            <person name="Weltjens I."/>
            <person name="Voet M."/>
            <person name="Bastiaens I."/>
            <person name="Aert R."/>
            <person name="Defoor E."/>
            <person name="Weitzenegger T."/>
            <person name="Bothe G."/>
            <person name="Ramsperger U."/>
            <person name="Hilbert H."/>
            <person name="Braun M."/>
            <person name="Holzer E."/>
            <person name="Brandt A."/>
            <person name="Peters S."/>
            <person name="van Staveren M."/>
            <person name="Dirkse W."/>
            <person name="Mooijman P."/>
            <person name="Klein Lankhorst R."/>
            <person name="Rose M."/>
            <person name="Hauf J."/>
            <person name="Koetter P."/>
            <person name="Berneiser S."/>
            <person name="Hempel S."/>
            <person name="Feldpausch M."/>
            <person name="Lamberth S."/>
            <person name="Van den Daele H."/>
            <person name="De Keyser A."/>
            <person name="Buysshaert C."/>
            <person name="Gielen J."/>
            <person name="Villarroel R."/>
            <person name="De Clercq R."/>
            <person name="van Montagu M."/>
            <person name="Rogers J."/>
            <person name="Cronin A."/>
            <person name="Quail M.A."/>
            <person name="Bray-Allen S."/>
            <person name="Clark L."/>
            <person name="Doggett J."/>
            <person name="Hall S."/>
            <person name="Kay M."/>
            <person name="Lennard N."/>
            <person name="McLay K."/>
            <person name="Mayes R."/>
            <person name="Pettett A."/>
            <person name="Rajandream M.A."/>
            <person name="Lyne M."/>
            <person name="Benes V."/>
            <person name="Rechmann S."/>
            <person name="Borkova D."/>
            <person name="Bloecker H."/>
            <person name="Scharfe M."/>
            <person name="Grimm M."/>
            <person name="Loehnert T.-H."/>
            <person name="Dose S."/>
            <person name="de Haan M."/>
            <person name="Maarse A.C."/>
            <person name="Schaefer M."/>
            <person name="Mueller-Auer S."/>
            <person name="Gabel C."/>
            <person name="Fuchs M."/>
            <person name="Fartmann B."/>
            <person name="Granderath K."/>
            <person name="Dauner D."/>
            <person name="Herzl A."/>
            <person name="Neumann S."/>
            <person name="Argiriou A."/>
            <person name="Vitale D."/>
            <person name="Liguori R."/>
            <person name="Piravandi E."/>
            <person name="Massenet O."/>
            <person name="Quigley F."/>
            <person name="Clabauld G."/>
            <person name="Muendlein A."/>
            <person name="Felber R."/>
            <person name="Schnabl S."/>
            <person name="Hiller R."/>
            <person name="Schmidt W."/>
            <person name="Lecharny A."/>
            <person name="Aubourg S."/>
            <person name="Chefdor F."/>
            <person name="Cooke R."/>
            <person name="Berger C."/>
            <person name="Monfort A."/>
            <person name="Casacuberta E."/>
            <person name="Gibbons T."/>
            <person name="Weber N."/>
            <person name="Vandenbol M."/>
            <person name="Bargues M."/>
            <person name="Terol J."/>
            <person name="Torres A."/>
            <person name="Perez-Perez A."/>
            <person name="Purnelle B."/>
            <person name="Bent E."/>
            <person name="Johnson S."/>
            <person name="Tacon D."/>
            <person name="Jesse T."/>
            <person name="Heijnen L."/>
            <person name="Schwarz S."/>
            <person name="Scholler P."/>
            <person name="Heber S."/>
            <person name="Francs P."/>
            <person name="Bielke C."/>
            <person name="Frishman D."/>
            <person name="Haase D."/>
            <person name="Lemcke K."/>
            <person name="Mewes H.-W."/>
            <person name="Stocker S."/>
            <person name="Zaccaria P."/>
            <person name="Bevan M."/>
            <person name="Wilson R.K."/>
            <person name="de la Bastide M."/>
            <person name="Habermann K."/>
            <person name="Parnell L."/>
            <person name="Dedhia N."/>
            <person name="Gnoj L."/>
            <person name="Schutz K."/>
            <person name="Huang E."/>
            <person name="Spiegel L."/>
            <person name="Sekhon M."/>
            <person name="Murray J."/>
            <person name="Sheet P."/>
            <person name="Cordes M."/>
            <person name="Abu-Threideh J."/>
            <person name="Stoneking T."/>
            <person name="Kalicki J."/>
            <person name="Graves T."/>
            <person name="Harmon G."/>
            <person name="Edwards J."/>
            <person name="Latreille P."/>
            <person name="Courtney L."/>
            <person name="Cloud J."/>
            <person name="Abbott A."/>
            <person name="Scott K."/>
            <person name="Johnson D."/>
            <person name="Minx P."/>
            <person name="Bentley D."/>
            <person name="Fulton B."/>
            <person name="Miller N."/>
            <person name="Greco T."/>
            <person name="Kemp K."/>
            <person name="Kramer J."/>
            <person name="Fulton L."/>
            <person name="Mardis E."/>
            <person name="Dante M."/>
            <person name="Pepin K."/>
            <person name="Hillier L.W."/>
            <person name="Nelson J."/>
            <person name="Spieth J."/>
            <person name="Ryan E."/>
            <person name="Andrews S."/>
            <person name="Geisel C."/>
            <person name="Layman D."/>
            <person name="Du H."/>
            <person name="Ali J."/>
            <person name="Berghoff A."/>
            <person name="Jones K."/>
            <person name="Drone K."/>
            <person name="Cotton M."/>
            <person name="Joshu C."/>
            <person name="Antonoiu B."/>
            <person name="Zidanic M."/>
            <person name="Strong C."/>
            <person name="Sun H."/>
            <person name="Lamar B."/>
            <person name="Yordan C."/>
            <person name="Ma P."/>
            <person name="Zhong J."/>
            <person name="Preston R."/>
            <person name="Vil D."/>
            <person name="Shekher M."/>
            <person name="Matero A."/>
            <person name="Shah R."/>
            <person name="Swaby I.K."/>
            <person name="O'Shaughnessy A."/>
            <person name="Rodriguez M."/>
            <person name="Hoffman J."/>
            <person name="Till S."/>
            <person name="Granat S."/>
            <person name="Shohdy N."/>
            <person name="Hasegawa A."/>
            <person name="Hameed A."/>
            <person name="Lodhi M."/>
            <person name="Johnson A."/>
            <person name="Chen E."/>
            <person name="Marra M.A."/>
            <person name="Martienssen R."/>
            <person name="McCombie W.R."/>
        </authorList>
    </citation>
    <scope>NUCLEOTIDE SEQUENCE [LARGE SCALE GENOMIC DNA]</scope>
    <source>
        <strain>cv. Columbia</strain>
    </source>
</reference>
<reference key="2">
    <citation type="journal article" date="2017" name="Plant J.">
        <title>Araport11: a complete reannotation of the Arabidopsis thaliana reference genome.</title>
        <authorList>
            <person name="Cheng C.Y."/>
            <person name="Krishnakumar V."/>
            <person name="Chan A.P."/>
            <person name="Thibaud-Nissen F."/>
            <person name="Schobel S."/>
            <person name="Town C.D."/>
        </authorList>
    </citation>
    <scope>GENOME REANNOTATION</scope>
    <source>
        <strain>cv. Columbia</strain>
    </source>
</reference>
<reference key="3">
    <citation type="submission" date="2006-08" db="EMBL/GenBank/DDBJ databases">
        <title>Arabidopsis ORF clones.</title>
        <authorList>
            <person name="Quinitio C."/>
            <person name="Chen H."/>
            <person name="Kim C.J."/>
            <person name="Shinn P."/>
            <person name="Ecker J.R."/>
        </authorList>
    </citation>
    <scope>NUCLEOTIDE SEQUENCE [LARGE SCALE MRNA]</scope>
    <source>
        <strain>cv. Columbia</strain>
    </source>
</reference>
<reference key="4">
    <citation type="submission" date="2002-03" db="EMBL/GenBank/DDBJ databases">
        <title>Full-length cDNA from Arabidopsis thaliana.</title>
        <authorList>
            <person name="Brover V.V."/>
            <person name="Troukhan M.E."/>
            <person name="Alexandrov N.A."/>
            <person name="Lu Y.-P."/>
            <person name="Flavell R.B."/>
            <person name="Feldmann K.A."/>
        </authorList>
    </citation>
    <scope>NUCLEOTIDE SEQUENCE [LARGE SCALE MRNA]</scope>
</reference>
<name>ADHL5_ARATH</name>